<protein>
    <recommendedName>
        <fullName>Basic phospholipase A2 Tpu-G6D49</fullName>
        <shortName>svPLA2</shortName>
        <ecNumber>3.1.1.4</ecNumber>
    </recommendedName>
    <alternativeName>
        <fullName>Phosphatidylcholine 2-acylhydrolase</fullName>
    </alternativeName>
</protein>
<evidence type="ECO:0000250" key="1"/>
<evidence type="ECO:0000255" key="2">
    <source>
        <dbReference type="PROSITE-ProRule" id="PRU10035"/>
    </source>
</evidence>
<evidence type="ECO:0000255" key="3">
    <source>
        <dbReference type="PROSITE-ProRule" id="PRU10036"/>
    </source>
</evidence>
<evidence type="ECO:0000269" key="4">
    <source>
    </source>
</evidence>
<evidence type="ECO:0000305" key="5"/>
<proteinExistence type="evidence at protein level"/>
<organism>
    <name type="scientific">Craspedocephalus puniceus</name>
    <name type="common">Flat-nosed pitviper</name>
    <name type="synonym">Trimeresurus puniceus</name>
    <dbReference type="NCBI Taxonomy" id="3147916"/>
    <lineage>
        <taxon>Eukaryota</taxon>
        <taxon>Metazoa</taxon>
        <taxon>Chordata</taxon>
        <taxon>Craniata</taxon>
        <taxon>Vertebrata</taxon>
        <taxon>Euteleostomi</taxon>
        <taxon>Lepidosauria</taxon>
        <taxon>Squamata</taxon>
        <taxon>Bifurcata</taxon>
        <taxon>Unidentata</taxon>
        <taxon>Episquamata</taxon>
        <taxon>Toxicofera</taxon>
        <taxon>Serpentes</taxon>
        <taxon>Colubroidea</taxon>
        <taxon>Viperidae</taxon>
        <taxon>Crotalinae</taxon>
        <taxon>Craspedocephalus</taxon>
    </lineage>
</organism>
<dbReference type="EC" id="3.1.1.4"/>
<dbReference type="EMBL" id="AY355173">
    <property type="protein sequence ID" value="AAR14167.1"/>
    <property type="molecule type" value="mRNA"/>
</dbReference>
<dbReference type="SMR" id="Q2YHJ7"/>
<dbReference type="GO" id="GO:0005576">
    <property type="term" value="C:extracellular region"/>
    <property type="evidence" value="ECO:0007669"/>
    <property type="project" value="UniProtKB-SubCell"/>
</dbReference>
<dbReference type="GO" id="GO:0005509">
    <property type="term" value="F:calcium ion binding"/>
    <property type="evidence" value="ECO:0007669"/>
    <property type="project" value="InterPro"/>
</dbReference>
<dbReference type="GO" id="GO:0047498">
    <property type="term" value="F:calcium-dependent phospholipase A2 activity"/>
    <property type="evidence" value="ECO:0007669"/>
    <property type="project" value="TreeGrafter"/>
</dbReference>
<dbReference type="GO" id="GO:0005543">
    <property type="term" value="F:phospholipid binding"/>
    <property type="evidence" value="ECO:0007669"/>
    <property type="project" value="TreeGrafter"/>
</dbReference>
<dbReference type="GO" id="GO:0090729">
    <property type="term" value="F:toxin activity"/>
    <property type="evidence" value="ECO:0007669"/>
    <property type="project" value="UniProtKB-KW"/>
</dbReference>
<dbReference type="GO" id="GO:0050482">
    <property type="term" value="P:arachidonate secretion"/>
    <property type="evidence" value="ECO:0007669"/>
    <property type="project" value="InterPro"/>
</dbReference>
<dbReference type="GO" id="GO:0016042">
    <property type="term" value="P:lipid catabolic process"/>
    <property type="evidence" value="ECO:0007669"/>
    <property type="project" value="UniProtKB-KW"/>
</dbReference>
<dbReference type="GO" id="GO:0042130">
    <property type="term" value="P:negative regulation of T cell proliferation"/>
    <property type="evidence" value="ECO:0007669"/>
    <property type="project" value="TreeGrafter"/>
</dbReference>
<dbReference type="GO" id="GO:0006644">
    <property type="term" value="P:phospholipid metabolic process"/>
    <property type="evidence" value="ECO:0007669"/>
    <property type="project" value="InterPro"/>
</dbReference>
<dbReference type="CDD" id="cd00125">
    <property type="entry name" value="PLA2c"/>
    <property type="match status" value="1"/>
</dbReference>
<dbReference type="FunFam" id="1.20.90.10:FF:000001">
    <property type="entry name" value="Basic phospholipase A2 homolog"/>
    <property type="match status" value="1"/>
</dbReference>
<dbReference type="Gene3D" id="1.20.90.10">
    <property type="entry name" value="Phospholipase A2 domain"/>
    <property type="match status" value="1"/>
</dbReference>
<dbReference type="InterPro" id="IPR001211">
    <property type="entry name" value="PLipase_A2"/>
</dbReference>
<dbReference type="InterPro" id="IPR033112">
    <property type="entry name" value="PLipase_A2_Asp_AS"/>
</dbReference>
<dbReference type="InterPro" id="IPR016090">
    <property type="entry name" value="PLipase_A2_dom"/>
</dbReference>
<dbReference type="InterPro" id="IPR036444">
    <property type="entry name" value="PLipase_A2_dom_sf"/>
</dbReference>
<dbReference type="InterPro" id="IPR033113">
    <property type="entry name" value="PLipase_A2_His_AS"/>
</dbReference>
<dbReference type="PANTHER" id="PTHR11716">
    <property type="entry name" value="PHOSPHOLIPASE A2 FAMILY MEMBER"/>
    <property type="match status" value="1"/>
</dbReference>
<dbReference type="PANTHER" id="PTHR11716:SF9">
    <property type="entry name" value="PHOSPHOLIPASE A2, MEMBRANE ASSOCIATED"/>
    <property type="match status" value="1"/>
</dbReference>
<dbReference type="Pfam" id="PF00068">
    <property type="entry name" value="Phospholip_A2_1"/>
    <property type="match status" value="1"/>
</dbReference>
<dbReference type="PRINTS" id="PR00389">
    <property type="entry name" value="PHPHLIPASEA2"/>
</dbReference>
<dbReference type="SMART" id="SM00085">
    <property type="entry name" value="PA2c"/>
    <property type="match status" value="1"/>
</dbReference>
<dbReference type="SUPFAM" id="SSF48619">
    <property type="entry name" value="Phospholipase A2, PLA2"/>
    <property type="match status" value="1"/>
</dbReference>
<dbReference type="PROSITE" id="PS00119">
    <property type="entry name" value="PA2_ASP"/>
    <property type="match status" value="1"/>
</dbReference>
<dbReference type="PROSITE" id="PS00118">
    <property type="entry name" value="PA2_HIS"/>
    <property type="match status" value="1"/>
</dbReference>
<reference key="1">
    <citation type="journal article" date="2005" name="FEBS J.">
        <title>Unusual venom phospholipases A2 of two primitive tree vipers Trimeresurus puniceus and Trimeresurus borneensis.</title>
        <authorList>
            <person name="Wang Y.-M."/>
            <person name="Peng H.-F."/>
            <person name="Tsai I.-H."/>
        </authorList>
    </citation>
    <scope>NUCLEOTIDE SEQUENCE [MRNA]</scope>
    <scope>PROTEIN SEQUENCE OF 17-39</scope>
    <scope>FUNCTION</scope>
    <scope>SUBUNIT</scope>
    <scope>MASS SPECTROMETRY</scope>
    <source>
        <tissue>Venom</tissue>
        <tissue>Venom gland</tissue>
    </source>
</reference>
<name>PA2B_CRAPU</name>
<feature type="signal peptide" evidence="4">
    <location>
        <begin position="1"/>
        <end position="16"/>
    </location>
</feature>
<feature type="chain" id="PRO_0000419061" description="Basic phospholipase A2 Tpu-G6D49">
    <location>
        <begin position="17"/>
        <end position="138"/>
    </location>
</feature>
<feature type="active site" evidence="1">
    <location>
        <position position="63"/>
    </location>
</feature>
<feature type="active site" evidence="1">
    <location>
        <position position="105"/>
    </location>
</feature>
<feature type="binding site" evidence="1">
    <location>
        <position position="43"/>
    </location>
    <ligand>
        <name>Ca(2+)</name>
        <dbReference type="ChEBI" id="CHEBI:29108"/>
    </ligand>
</feature>
<feature type="binding site" evidence="1">
    <location>
        <position position="45"/>
    </location>
    <ligand>
        <name>Ca(2+)</name>
        <dbReference type="ChEBI" id="CHEBI:29108"/>
    </ligand>
</feature>
<feature type="binding site" evidence="1">
    <location>
        <position position="47"/>
    </location>
    <ligand>
        <name>Ca(2+)</name>
        <dbReference type="ChEBI" id="CHEBI:29108"/>
    </ligand>
</feature>
<feature type="binding site" evidence="1">
    <location>
        <position position="64"/>
    </location>
    <ligand>
        <name>Ca(2+)</name>
        <dbReference type="ChEBI" id="CHEBI:29108"/>
    </ligand>
</feature>
<feature type="disulfide bond" evidence="1">
    <location>
        <begin position="42"/>
        <end position="131"/>
    </location>
</feature>
<feature type="disulfide bond" evidence="1">
    <location>
        <begin position="44"/>
        <end position="60"/>
    </location>
</feature>
<feature type="disulfide bond" evidence="1">
    <location>
        <begin position="59"/>
        <end position="111"/>
    </location>
</feature>
<feature type="disulfide bond" evidence="1">
    <location>
        <begin position="65"/>
        <end position="138"/>
    </location>
</feature>
<feature type="disulfide bond" evidence="1">
    <location>
        <begin position="66"/>
        <end position="104"/>
    </location>
</feature>
<feature type="disulfide bond" evidence="1">
    <location>
        <begin position="73"/>
        <end position="97"/>
    </location>
</feature>
<feature type="disulfide bond" evidence="1">
    <location>
        <begin position="91"/>
        <end position="102"/>
    </location>
</feature>
<keyword id="KW-1203">Blood coagulation cascade inhibiting toxin</keyword>
<keyword id="KW-0903">Direct protein sequencing</keyword>
<keyword id="KW-1015">Disulfide bond</keyword>
<keyword id="KW-1199">Hemostasis impairing toxin</keyword>
<keyword id="KW-0378">Hydrolase</keyword>
<keyword id="KW-0442">Lipid degradation</keyword>
<keyword id="KW-0443">Lipid metabolism</keyword>
<keyword id="KW-0479">Metal-binding</keyword>
<keyword id="KW-1201">Platelet aggregation inhibiting toxin</keyword>
<keyword id="KW-0964">Secreted</keyword>
<keyword id="KW-0732">Signal</keyword>
<keyword id="KW-0800">Toxin</keyword>
<accession>Q2YHJ7</accession>
<comment type="function">
    <text evidence="4">Snake venom phospholipase A2 (PLA2) that impairs hemostasis. It weakly inhibits ADP-induced platelet aggregation when tested on platelet rich plasma from human and rabbit blood (15-25% of inhibition at 5-10 ug of enzyme), and dose-dependently inhibits blood coagulation, possibly by inhibiting thrombin activation. Also induces local edema a few hours after injection in the hind foot. Exhibits high hydrolytic activities toward L-dipalmitoyl phosphatidylcholine. PLA2 catalyzes the calcium-dependent hydrolysis of the 2-acyl groups in 3-sn-phosphoglycerides.</text>
</comment>
<comment type="catalytic activity">
    <reaction evidence="2 3">
        <text>a 1,2-diacyl-sn-glycero-3-phosphocholine + H2O = a 1-acyl-sn-glycero-3-phosphocholine + a fatty acid + H(+)</text>
        <dbReference type="Rhea" id="RHEA:15801"/>
        <dbReference type="ChEBI" id="CHEBI:15377"/>
        <dbReference type="ChEBI" id="CHEBI:15378"/>
        <dbReference type="ChEBI" id="CHEBI:28868"/>
        <dbReference type="ChEBI" id="CHEBI:57643"/>
        <dbReference type="ChEBI" id="CHEBI:58168"/>
        <dbReference type="EC" id="3.1.1.4"/>
    </reaction>
</comment>
<comment type="cofactor">
    <cofactor evidence="1">
        <name>Ca(2+)</name>
        <dbReference type="ChEBI" id="CHEBI:29108"/>
    </cofactor>
    <text evidence="1">Binds 1 Ca(2+) ion.</text>
</comment>
<comment type="subunit">
    <text evidence="4">Monomer.</text>
</comment>
<comment type="subcellular location">
    <subcellularLocation>
        <location>Secreted</location>
    </subcellularLocation>
</comment>
<comment type="tissue specificity">
    <text>Expressed by the venom gland.</text>
</comment>
<comment type="mass spectrometry"/>
<comment type="similarity">
    <text evidence="5">Belongs to the phospholipase A2 family. Group II subfamily. D49 sub-subfamily.</text>
</comment>
<sequence>MRTLWIMAVLLVGVEGSLLEFGRMIKEETGKNPLFSYISYGCYCGWGGQGQPKDATDRCCFVHDCCYGKLWSCSPKTDIYFYYRKNGAIVCARGTWCEKQICECDKAAAICFRENLGTYKAEYESYGKSRCTEKSLKC</sequence>